<keyword id="KW-0002">3D-structure</keyword>
<keyword id="KW-0025">Alternative splicing</keyword>
<keyword id="KW-0067">ATP-binding</keyword>
<keyword id="KW-0103">Bromodomain</keyword>
<keyword id="KW-0131">Cell cycle</keyword>
<keyword id="KW-0903">Direct protein sequencing</keyword>
<keyword id="KW-0238">DNA-binding</keyword>
<keyword id="KW-0418">Kinase</keyword>
<keyword id="KW-0547">Nucleotide-binding</keyword>
<keyword id="KW-0539">Nucleus</keyword>
<keyword id="KW-0597">Phosphoprotein</keyword>
<keyword id="KW-1185">Reference proteome</keyword>
<keyword id="KW-0677">Repeat</keyword>
<keyword id="KW-0723">Serine/threonine-protein kinase</keyword>
<keyword id="KW-0804">Transcription</keyword>
<keyword id="KW-0805">Transcription regulation</keyword>
<keyword id="KW-0808">Transferase</keyword>
<organism>
    <name type="scientific">Drosophila melanogaster</name>
    <name type="common">Fruit fly</name>
    <dbReference type="NCBI Taxonomy" id="7227"/>
    <lineage>
        <taxon>Eukaryota</taxon>
        <taxon>Metazoa</taxon>
        <taxon>Ecdysozoa</taxon>
        <taxon>Arthropoda</taxon>
        <taxon>Hexapoda</taxon>
        <taxon>Insecta</taxon>
        <taxon>Pterygota</taxon>
        <taxon>Neoptera</taxon>
        <taxon>Endopterygota</taxon>
        <taxon>Diptera</taxon>
        <taxon>Brachycera</taxon>
        <taxon>Muscomorpha</taxon>
        <taxon>Ephydroidea</taxon>
        <taxon>Drosophilidae</taxon>
        <taxon>Drosophila</taxon>
        <taxon>Sophophora</taxon>
    </lineage>
</organism>
<protein>
    <recommendedName>
        <fullName>Transcription initiation factor TFIID subunit 1</fullName>
        <ecNumber>2.7.11.1</ecNumber>
    </recommendedName>
    <alternativeName>
        <fullName>TAFII250</fullName>
    </alternativeName>
    <alternativeName>
        <fullName>TBP-associated factor 230 kDa</fullName>
        <shortName>p230</shortName>
    </alternativeName>
    <alternativeName>
        <fullName>Transcription initiation factor TFIID 230 kDa subunit</fullName>
        <shortName>TAFII-230</shortName>
    </alternativeName>
</protein>
<evidence type="ECO:0000250" key="1"/>
<evidence type="ECO:0000255" key="2"/>
<evidence type="ECO:0000255" key="3">
    <source>
        <dbReference type="PROSITE-ProRule" id="PRU00035"/>
    </source>
</evidence>
<evidence type="ECO:0000256" key="4">
    <source>
        <dbReference type="SAM" id="MobiDB-lite"/>
    </source>
</evidence>
<evidence type="ECO:0000269" key="5">
    <source>
    </source>
</evidence>
<evidence type="ECO:0000269" key="6">
    <source>
    </source>
</evidence>
<evidence type="ECO:0000269" key="7">
    <source>
    </source>
</evidence>
<evidence type="ECO:0000269" key="8">
    <source>
    </source>
</evidence>
<evidence type="ECO:0000269" key="9">
    <source>
    </source>
</evidence>
<evidence type="ECO:0000269" key="10">
    <source>
    </source>
</evidence>
<evidence type="ECO:0000269" key="11">
    <source>
    </source>
</evidence>
<evidence type="ECO:0000269" key="12">
    <source>
    </source>
</evidence>
<evidence type="ECO:0000303" key="13">
    <source>
    </source>
</evidence>
<evidence type="ECO:0000303" key="14">
    <source>
    </source>
</evidence>
<evidence type="ECO:0000305" key="15"/>
<evidence type="ECO:0000305" key="16">
    <source>
    </source>
</evidence>
<evidence type="ECO:0000305" key="17">
    <source>
    </source>
</evidence>
<evidence type="ECO:0007829" key="18">
    <source>
        <dbReference type="PDB" id="1TBA"/>
    </source>
</evidence>
<proteinExistence type="evidence at protein level"/>
<sequence>MEMESDNSDDEGSIGNGLDLTGILFGNIDSEGRLLQDDDGEGRGGTGFDAELRENIGSLSKLGLDSMLLEVIDLKEAEPPSDDEEEEDARPSAVSASEGMSAFDALKAGVKREDGAVKAQDDAIDYSDITELSEDCPRTPPEETSTYDDLEDAIPASKVEAKLTKDDKELMPPPSAPMRSGSGGGIEEPAKSNDASSPSDDSKSTDSKDADRKLDTPLADILPSKYQNVDVRELFPDFRPQKVLRFSRLFGPGKPTSLPQIWRHVRKRRRKRNQSRDQKTTNTGGSDSPSDTEEPRKRGFSLHYAAEPTPAECMSDDEDKLLGDFNSEDVRPEGPDNGENSDQKPKVADWRFGPAQIWYDMLEVPDSGEGFNYGFKTKAASTSSQPQLKDERRVKSPEDDVEDPSIADDAFLMVSQLHWEDDVVWDGNDIKAKVLQKLNSKTNAAGWLPSSGSRTAGAFSQPGKPSMPVGSGSSKQGSGASSKKAQQNAQAKPAEAPDDTWYSLFPVENEELIYYKWEDEVIWDAQQVSKVPKPKVLTLDPNDENIILGIPDDIDPSKINKSTGPPPKIKIPHPHVKKSKILLGKAGVINVLAEDTPPPPPKSPDRDPFNISNDTYYTPKTEPTLRLKVGGNLIQHSTPVVELRAPFVPTHMGPMKLRAFHRPPLKKYSHGPMAQSIPHPVFPLLKTIAKKAKQREVERIASGGGDVFFMRNPEDLSGRDGDIVLAEFCEEHPPLINQVGMCSKIKNYYKRKAEKDSGPQDFVYGEVAFAHTSPFLGILHPGQCIQAIENNMYRAPIYPHKMAHNDFLVIRTRNNYWIRSVNSIYTVGQECPLYEVPGPNSKRANNFTRDFLQVFIYRLFWKSRDNPRRIRMDDIKQAFPAHSESSIRKRLKQCADFKRTGMDSNWWVIKPEFRLPSEEEIRAMVSPEQCCAYFSMIAAEQRLKDAGYGEKFLFAPQEDDDEEAQLKLDDEVKVAPWNTTRAYIQAMRGKCLLQLSGPADPTGCGEGFSYVRVPNKPTQTKEEQESQPKRSVTGTDADLRRLPLQRAKELLRQFKVPEEEIKKLSRWEVIDVVRTLSTEKAKAGEEGMDKFSRGNRFSIAEHQERYKEECQRIFDLQNRVLASSEVLSTDEAESSASEESDLEELGKNLENMLSNKKTSTQLSREREELERQELLRQLDEEHGGPSGSGGAKGAKGKDDPGQQMLATNNQGRILRITRTFRGNDGKEYTRVETVRRQPVIDAYIKIRTTKDEQFIKQFATLDEQQKEEMKREKRRIQEQLRRIKRNQERERLAQLAQNQKLQPGGMPTSLGDPKSSGGHSHKERDSGYKEVSPSRKKFKLKPDLKLKCGACGQVGHMRTNKACPLYSGMQSSLSQSNPSLADDFDEQSEKEMTMDDDDLVNVDGTKVTLSSKILKRHGGDDGKRRSGSSSGFTLKVPRDAMGKKKRRVGGDLHCDYLQRHNKTANRRRTDPVVVLSSILEIIHNELRSMPDVSPFLFPVSAKKVPDYYRVVTKPMDLQTMREYIRQRRYTSREMFLEDLKQIVDNSLIYNGPQSAYTLAAQRMFSSCFELLAEREDKLMRLEKAINPLLDDDDQVALSFIFDKLHSQIKQLPESWPFLKPVNKKQVKDYYTVIKRPMDLETIGKNIEAHRYHSRAEYLADIELIATNCEQYNGSDTRYTKFSKKILEYAQTQLIEFSEHCGQLENNIAKTQERARENAPEFDEAWGNDDYNFDRGSRASSPGDDYIDVEGHGGHASSSNSIHRSMGAEAGSSHTAPAVRKPAPPGPGEVKRGRGRPRKQRDPVEEVKSQNPVKRGRGRPRKDSLASNMSHTQAYFLDEDLQCSTDDEDDDEEEDFQEVSEDENNAASILDQGERINAPADAMDGMFDPKNIKTEIDLEAHQMAEEPIGEDDSQQVAEAMVQLSGVGGYYAQQQQDESMDVDPNYDPSDFLAMHKQRQSLGEPSSLQGAFTNFLSHEQDDNGPYNPAEASTSAASGADLGMDASMAMQMAPEMPVNTMNNGMGIDDDLDISESDEEDDGSRVRIKKEVFDDGDYALQHQQMGQAASQSQIYMVDSSNEPTTLDYQQPPQLDFQQVQEMEQLQHQVMPPMQSEQLQQQQTPQGDNDYAWTF</sequence>
<dbReference type="EC" id="2.7.11.1"/>
<dbReference type="EMBL" id="S61883">
    <property type="protein sequence ID" value="AAB26991.2"/>
    <property type="molecule type" value="mRNA"/>
</dbReference>
<dbReference type="EMBL" id="AE001572">
    <property type="protein sequence ID" value="AAD19815.1"/>
    <property type="molecule type" value="Genomic_DNA"/>
</dbReference>
<dbReference type="EMBL" id="AE014297">
    <property type="protein sequence ID" value="AAF54102.3"/>
    <property type="molecule type" value="Genomic_DNA"/>
</dbReference>
<dbReference type="EMBL" id="AE014297">
    <property type="protein sequence ID" value="AAS65116.1"/>
    <property type="molecule type" value="Genomic_DNA"/>
</dbReference>
<dbReference type="EMBL" id="AE014297">
    <property type="protein sequence ID" value="AAS65117.1"/>
    <property type="molecule type" value="Genomic_DNA"/>
</dbReference>
<dbReference type="EMBL" id="BT004888">
    <property type="protein sequence ID" value="AAO47866.1"/>
    <property type="molecule type" value="mRNA"/>
</dbReference>
<dbReference type="PIR" id="A47371">
    <property type="entry name" value="A47371"/>
</dbReference>
<dbReference type="RefSeq" id="NP_476956.3">
    <molecule id="P51123-2"/>
    <property type="nucleotide sequence ID" value="NM_057608.5"/>
</dbReference>
<dbReference type="RefSeq" id="NP_996159.1">
    <molecule id="P51123-3"/>
    <property type="nucleotide sequence ID" value="NM_206437.2"/>
</dbReference>
<dbReference type="RefSeq" id="NP_996160.1">
    <molecule id="P51123-1"/>
    <property type="nucleotide sequence ID" value="NM_206438.2"/>
</dbReference>
<dbReference type="PDB" id="1TBA">
    <property type="method" value="NMR"/>
    <property type="chains" value="A=11-77"/>
</dbReference>
<dbReference type="PDBsum" id="1TBA"/>
<dbReference type="BMRB" id="P51123"/>
<dbReference type="SMR" id="P51123"/>
<dbReference type="BioGRID" id="66011">
    <property type="interactions" value="26"/>
</dbReference>
<dbReference type="DIP" id="DIP-228N"/>
<dbReference type="FunCoup" id="P51123">
    <property type="interactions" value="2202"/>
</dbReference>
<dbReference type="IntAct" id="P51123">
    <property type="interactions" value="16"/>
</dbReference>
<dbReference type="MINT" id="P51123"/>
<dbReference type="STRING" id="7227.FBpp0293442"/>
<dbReference type="GlyGen" id="P51123">
    <property type="glycosylation" value="1 site"/>
</dbReference>
<dbReference type="iPTMnet" id="P51123"/>
<dbReference type="PaxDb" id="7227-FBpp0293442"/>
<dbReference type="EnsemblMetazoa" id="FBtr0081684">
    <molecule id="P51123-2"/>
    <property type="protein sequence ID" value="FBpp0081184"/>
    <property type="gene ID" value="FBgn0010355"/>
</dbReference>
<dbReference type="EnsemblMetazoa" id="FBtr0081685">
    <molecule id="P51123-1"/>
    <property type="protein sequence ID" value="FBpp0089369"/>
    <property type="gene ID" value="FBgn0010355"/>
</dbReference>
<dbReference type="EnsemblMetazoa" id="FBtr0081686">
    <molecule id="P51123-3"/>
    <property type="protein sequence ID" value="FBpp0089420"/>
    <property type="gene ID" value="FBgn0010355"/>
</dbReference>
<dbReference type="GeneID" id="40813"/>
<dbReference type="KEGG" id="dme:Dmel_CG17603"/>
<dbReference type="AGR" id="FB:FBgn0010355"/>
<dbReference type="CTD" id="6872"/>
<dbReference type="FlyBase" id="FBgn0010355">
    <property type="gene designation" value="Taf1"/>
</dbReference>
<dbReference type="VEuPathDB" id="VectorBase:FBgn0010355"/>
<dbReference type="eggNOG" id="KOG0008">
    <property type="taxonomic scope" value="Eukaryota"/>
</dbReference>
<dbReference type="GeneTree" id="ENSGT00940000155242"/>
<dbReference type="InParanoid" id="P51123"/>
<dbReference type="OrthoDB" id="5752at2759"/>
<dbReference type="PhylomeDB" id="P51123"/>
<dbReference type="BRENDA" id="2.3.1.48">
    <property type="organism ID" value="1994"/>
</dbReference>
<dbReference type="Reactome" id="R-DME-674695">
    <property type="pathway name" value="RNA Polymerase II Pre-transcription Events"/>
</dbReference>
<dbReference type="Reactome" id="R-DME-6804756">
    <property type="pathway name" value="Regulation of TP53 Activity through Phosphorylation"/>
</dbReference>
<dbReference type="Reactome" id="R-DME-73776">
    <property type="pathway name" value="RNA Polymerase II Promoter Escape"/>
</dbReference>
<dbReference type="Reactome" id="R-DME-73779">
    <property type="pathway name" value="RNA Polymerase II Transcription Pre-Initiation And Promoter Opening"/>
</dbReference>
<dbReference type="Reactome" id="R-DME-75953">
    <property type="pathway name" value="RNA Polymerase II Transcription Initiation"/>
</dbReference>
<dbReference type="Reactome" id="R-DME-76042">
    <property type="pathway name" value="RNA Polymerase II Transcription Initiation And Promoter Clearance"/>
</dbReference>
<dbReference type="SignaLink" id="P51123"/>
<dbReference type="BioGRID-ORCS" id="40813">
    <property type="hits" value="1 hit in 3 CRISPR screens"/>
</dbReference>
<dbReference type="EvolutionaryTrace" id="P51123"/>
<dbReference type="GenomeRNAi" id="40813"/>
<dbReference type="PRO" id="PR:P51123"/>
<dbReference type="Proteomes" id="UP000000803">
    <property type="component" value="Chromosome 3R"/>
</dbReference>
<dbReference type="Bgee" id="FBgn0010355">
    <property type="expression patterns" value="Expressed in eye disc (Drosophila) and 116 other cell types or tissues"/>
</dbReference>
<dbReference type="ExpressionAtlas" id="P51123">
    <property type="expression patterns" value="baseline and differential"/>
</dbReference>
<dbReference type="GO" id="GO:0005730">
    <property type="term" value="C:nucleolus"/>
    <property type="evidence" value="ECO:0000314"/>
    <property type="project" value="FlyBase"/>
</dbReference>
<dbReference type="GO" id="GO:0005654">
    <property type="term" value="C:nucleoplasm"/>
    <property type="evidence" value="ECO:0000314"/>
    <property type="project" value="FlyBase"/>
</dbReference>
<dbReference type="GO" id="GO:0005634">
    <property type="term" value="C:nucleus"/>
    <property type="evidence" value="ECO:0000314"/>
    <property type="project" value="FlyBase"/>
</dbReference>
<dbReference type="GO" id="GO:0035102">
    <property type="term" value="C:PRC1 complex"/>
    <property type="evidence" value="ECO:0000304"/>
    <property type="project" value="ParkinsonsUK-UCL"/>
</dbReference>
<dbReference type="GO" id="GO:0005669">
    <property type="term" value="C:transcription factor TFIID complex"/>
    <property type="evidence" value="ECO:0000314"/>
    <property type="project" value="FlyBase"/>
</dbReference>
<dbReference type="GO" id="GO:0005524">
    <property type="term" value="F:ATP binding"/>
    <property type="evidence" value="ECO:0007669"/>
    <property type="project" value="UniProtKB-KW"/>
</dbReference>
<dbReference type="GO" id="GO:0036408">
    <property type="term" value="F:histone H3K14 acetyltransferase activity"/>
    <property type="evidence" value="ECO:0000314"/>
    <property type="project" value="FlyBase"/>
</dbReference>
<dbReference type="GO" id="GO:0010485">
    <property type="term" value="F:histone H4 acetyltransferase activity"/>
    <property type="evidence" value="ECO:0000314"/>
    <property type="project" value="FlyBase"/>
</dbReference>
<dbReference type="GO" id="GO:0106310">
    <property type="term" value="F:protein serine kinase activity"/>
    <property type="evidence" value="ECO:0007669"/>
    <property type="project" value="RHEA"/>
</dbReference>
<dbReference type="GO" id="GO:0004674">
    <property type="term" value="F:protein serine/threonine kinase activity"/>
    <property type="evidence" value="ECO:0000250"/>
    <property type="project" value="FlyBase"/>
</dbReference>
<dbReference type="GO" id="GO:0016251">
    <property type="term" value="F:RNA polymerase II general transcription initiation factor activity"/>
    <property type="evidence" value="ECO:0007669"/>
    <property type="project" value="InterPro"/>
</dbReference>
<dbReference type="GO" id="GO:0043565">
    <property type="term" value="F:sequence-specific DNA binding"/>
    <property type="evidence" value="ECO:0000314"/>
    <property type="project" value="FlyBase"/>
</dbReference>
<dbReference type="GO" id="GO:0017025">
    <property type="term" value="F:TBP-class protein binding"/>
    <property type="evidence" value="ECO:0000318"/>
    <property type="project" value="GO_Central"/>
</dbReference>
<dbReference type="GO" id="GO:0004839">
    <property type="term" value="F:ubiquitin activating enzyme activity"/>
    <property type="evidence" value="ECO:0000314"/>
    <property type="project" value="FlyBase"/>
</dbReference>
<dbReference type="GO" id="GO:0061631">
    <property type="term" value="F:ubiquitin conjugating enzyme activity"/>
    <property type="evidence" value="ECO:0000314"/>
    <property type="project" value="FlyBase"/>
</dbReference>
<dbReference type="GO" id="GO:0051123">
    <property type="term" value="P:RNA polymerase II preinitiation complex assembly"/>
    <property type="evidence" value="ECO:0000314"/>
    <property type="project" value="BHF-UCL"/>
</dbReference>
<dbReference type="GO" id="GO:0006367">
    <property type="term" value="P:transcription initiation at RNA polymerase II promoter"/>
    <property type="evidence" value="ECO:0000314"/>
    <property type="project" value="FlyBase"/>
</dbReference>
<dbReference type="CDD" id="cd05511">
    <property type="entry name" value="Bromo_TFIID"/>
    <property type="match status" value="2"/>
</dbReference>
<dbReference type="DisProt" id="DP00081"/>
<dbReference type="FunFam" id="1.20.920.10:FF:000039">
    <property type="entry name" value="Transcription initiation factor TFIID subunit"/>
    <property type="match status" value="1"/>
</dbReference>
<dbReference type="FunFam" id="1.20.920.10:FF:000051">
    <property type="entry name" value="Transcription initiation factor TFIID subunit"/>
    <property type="match status" value="1"/>
</dbReference>
<dbReference type="Gene3D" id="1.20.920.10">
    <property type="entry name" value="Bromodomain-like"/>
    <property type="match status" value="2"/>
</dbReference>
<dbReference type="Gene3D" id="1.10.1100.10">
    <property type="entry name" value="TAFII-230 TBP-binding domain"/>
    <property type="match status" value="1"/>
</dbReference>
<dbReference type="InterPro" id="IPR017956">
    <property type="entry name" value="AT_hook_DNA-bd_motif"/>
</dbReference>
<dbReference type="InterPro" id="IPR001487">
    <property type="entry name" value="Bromodomain"/>
</dbReference>
<dbReference type="InterPro" id="IPR036427">
    <property type="entry name" value="Bromodomain-like_sf"/>
</dbReference>
<dbReference type="InterPro" id="IPR018359">
    <property type="entry name" value="Bromodomain_CS"/>
</dbReference>
<dbReference type="InterPro" id="IPR040240">
    <property type="entry name" value="TAF1"/>
</dbReference>
<dbReference type="InterPro" id="IPR011177">
    <property type="entry name" value="TAF1_animal"/>
</dbReference>
<dbReference type="InterPro" id="IPR022591">
    <property type="entry name" value="TAF1_HAT_dom"/>
</dbReference>
<dbReference type="InterPro" id="IPR009067">
    <property type="entry name" value="TAF_II_230-bd"/>
</dbReference>
<dbReference type="InterPro" id="IPR036741">
    <property type="entry name" value="TAFII-230_TBP-bd_sf"/>
</dbReference>
<dbReference type="InterPro" id="IPR041670">
    <property type="entry name" value="Znf-CCHC_6"/>
</dbReference>
<dbReference type="PANTHER" id="PTHR13900">
    <property type="entry name" value="TRANSCRIPTION INITIATION FACTOR TFIID"/>
    <property type="match status" value="1"/>
</dbReference>
<dbReference type="PANTHER" id="PTHR13900:SF0">
    <property type="entry name" value="TRANSCRIPTION INITIATION FACTOR TFIID SUBUNIT 1"/>
    <property type="match status" value="1"/>
</dbReference>
<dbReference type="Pfam" id="PF00439">
    <property type="entry name" value="Bromodomain"/>
    <property type="match status" value="2"/>
</dbReference>
<dbReference type="Pfam" id="PF12157">
    <property type="entry name" value="DUF3591"/>
    <property type="match status" value="1"/>
</dbReference>
<dbReference type="Pfam" id="PF09247">
    <property type="entry name" value="TBP-binding"/>
    <property type="match status" value="1"/>
</dbReference>
<dbReference type="Pfam" id="PF15288">
    <property type="entry name" value="zf-CCHC_6"/>
    <property type="match status" value="1"/>
</dbReference>
<dbReference type="PIRSF" id="PIRSF003047">
    <property type="entry name" value="TAF1_animal"/>
    <property type="match status" value="1"/>
</dbReference>
<dbReference type="PRINTS" id="PR00503">
    <property type="entry name" value="BROMODOMAIN"/>
</dbReference>
<dbReference type="SMART" id="SM00384">
    <property type="entry name" value="AT_hook"/>
    <property type="match status" value="2"/>
</dbReference>
<dbReference type="SMART" id="SM00297">
    <property type="entry name" value="BROMO"/>
    <property type="match status" value="2"/>
</dbReference>
<dbReference type="SUPFAM" id="SSF47370">
    <property type="entry name" value="Bromodomain"/>
    <property type="match status" value="2"/>
</dbReference>
<dbReference type="SUPFAM" id="SSF47055">
    <property type="entry name" value="TAF(II)230 TBP-binding fragment"/>
    <property type="match status" value="1"/>
</dbReference>
<dbReference type="PROSITE" id="PS00633">
    <property type="entry name" value="BROMODOMAIN_1"/>
    <property type="match status" value="2"/>
</dbReference>
<dbReference type="PROSITE" id="PS50014">
    <property type="entry name" value="BROMODOMAIN_2"/>
    <property type="match status" value="2"/>
</dbReference>
<feature type="chain" id="PRO_0000211216" description="Transcription initiation factor TFIID subunit 1">
    <location>
        <begin position="1"/>
        <end position="2129"/>
    </location>
</feature>
<feature type="domain" description="Protein kinase 1">
    <location>
        <begin position="1"/>
        <end position="423"/>
    </location>
</feature>
<feature type="domain" description="Bromo 1" evidence="3">
    <location>
        <begin position="1466"/>
        <end position="1574"/>
    </location>
</feature>
<feature type="domain" description="Protein kinase 2">
    <location>
        <begin position="1515"/>
        <end position="2065"/>
    </location>
</feature>
<feature type="domain" description="Bromo 2" evidence="3">
    <location>
        <begin position="1588"/>
        <end position="1696"/>
    </location>
</feature>
<feature type="region of interest" description="Disordered" evidence="4">
    <location>
        <begin position="77"/>
        <end position="233"/>
    </location>
</feature>
<feature type="region of interest" description="Disordered" evidence="4">
    <location>
        <begin position="246"/>
        <end position="348"/>
    </location>
</feature>
<feature type="region of interest" description="Disordered" evidence="4">
    <location>
        <begin position="377"/>
        <end position="405"/>
    </location>
</feature>
<feature type="region of interest" description="Disordered" evidence="4">
    <location>
        <begin position="445"/>
        <end position="497"/>
    </location>
</feature>
<feature type="region of interest" description="Disordered" evidence="4">
    <location>
        <begin position="1016"/>
        <end position="1038"/>
    </location>
</feature>
<feature type="region of interest" description="Disordered" evidence="4">
    <location>
        <begin position="1149"/>
        <end position="1208"/>
    </location>
</feature>
<feature type="region of interest" description="Disordered" evidence="4">
    <location>
        <begin position="1296"/>
        <end position="1336"/>
    </location>
</feature>
<feature type="region of interest" description="Disordered" evidence="4">
    <location>
        <begin position="1368"/>
        <end position="1391"/>
    </location>
</feature>
<feature type="region of interest" description="Disordered" evidence="4">
    <location>
        <begin position="1415"/>
        <end position="1435"/>
    </location>
</feature>
<feature type="region of interest" description="Disordered" evidence="4">
    <location>
        <begin position="1710"/>
        <end position="1872"/>
    </location>
</feature>
<feature type="region of interest" description="Disordered" evidence="4">
    <location>
        <begin position="1973"/>
        <end position="1992"/>
    </location>
</feature>
<feature type="region of interest" description="Disordered" evidence="4">
    <location>
        <begin position="2018"/>
        <end position="2042"/>
    </location>
</feature>
<feature type="region of interest" description="Disordered" evidence="4">
    <location>
        <begin position="2101"/>
        <end position="2129"/>
    </location>
</feature>
<feature type="short sequence motif" description="Nuclear localization signal" evidence="2">
    <location>
        <begin position="1442"/>
        <end position="1448"/>
    </location>
</feature>
<feature type="compositionally biased region" description="Acidic residues" evidence="4">
    <location>
        <begin position="79"/>
        <end position="88"/>
    </location>
</feature>
<feature type="compositionally biased region" description="Basic and acidic residues" evidence="4">
    <location>
        <begin position="110"/>
        <end position="121"/>
    </location>
</feature>
<feature type="compositionally biased region" description="Basic and acidic residues" evidence="4">
    <location>
        <begin position="159"/>
        <end position="170"/>
    </location>
</feature>
<feature type="compositionally biased region" description="Basic and acidic residues" evidence="4">
    <location>
        <begin position="200"/>
        <end position="215"/>
    </location>
</feature>
<feature type="compositionally biased region" description="Basic residues" evidence="4">
    <location>
        <begin position="263"/>
        <end position="273"/>
    </location>
</feature>
<feature type="compositionally biased region" description="Polar residues" evidence="4">
    <location>
        <begin position="280"/>
        <end position="289"/>
    </location>
</feature>
<feature type="compositionally biased region" description="Basic and acidic residues" evidence="4">
    <location>
        <begin position="388"/>
        <end position="398"/>
    </location>
</feature>
<feature type="compositionally biased region" description="Low complexity" evidence="4">
    <location>
        <begin position="470"/>
        <end position="494"/>
    </location>
</feature>
<feature type="compositionally biased region" description="Basic and acidic residues" evidence="4">
    <location>
        <begin position="1019"/>
        <end position="1028"/>
    </location>
</feature>
<feature type="compositionally biased region" description="Polar residues" evidence="4">
    <location>
        <begin position="1151"/>
        <end position="1160"/>
    </location>
</feature>
<feature type="compositionally biased region" description="Basic and acidic residues" evidence="4">
    <location>
        <begin position="1163"/>
        <end position="1183"/>
    </location>
</feature>
<feature type="compositionally biased region" description="Gly residues" evidence="4">
    <location>
        <begin position="1184"/>
        <end position="1193"/>
    </location>
</feature>
<feature type="compositionally biased region" description="Polar residues" evidence="4">
    <location>
        <begin position="1368"/>
        <end position="1379"/>
    </location>
</feature>
<feature type="compositionally biased region" description="Acidic residues" evidence="4">
    <location>
        <begin position="1836"/>
        <end position="1863"/>
    </location>
</feature>
<feature type="compositionally biased region" description="Acidic residues" evidence="4">
    <location>
        <begin position="2023"/>
        <end position="2037"/>
    </location>
</feature>
<feature type="compositionally biased region" description="Low complexity" evidence="4">
    <location>
        <begin position="2101"/>
        <end position="2120"/>
    </location>
</feature>
<feature type="modified residue" description="Phosphoserine" evidence="5">
    <location>
        <position position="286"/>
    </location>
</feature>
<feature type="modified residue" description="Phosphoserine" evidence="5">
    <location>
        <position position="288"/>
    </location>
</feature>
<feature type="modified residue" description="Phosphoserine" evidence="5">
    <location>
        <position position="290"/>
    </location>
</feature>
<feature type="modified residue" description="Phosphoserine; by autocatalysis" evidence="1">
    <location>
        <position position="315"/>
    </location>
</feature>
<feature type="modified residue" description="Phosphoserine" evidence="5">
    <location>
        <position position="603"/>
    </location>
</feature>
<feature type="modified residue" description="Phosphoserine" evidence="5">
    <location>
        <position position="1740"/>
    </location>
</feature>
<feature type="splice variant" id="VSP_014794" description="In isoform A." evidence="13 14">
    <location>
        <begin position="1805"/>
        <end position="1837"/>
    </location>
</feature>
<feature type="splice variant" id="VSP_014795" description="In isoform A and isoform C." evidence="13 14">
    <location>
        <begin position="1904"/>
        <end position="1934"/>
    </location>
</feature>
<feature type="sequence variant">
    <original>P</original>
    <variation>S</variation>
    <location>
        <position position="572"/>
    </location>
</feature>
<feature type="sequence conflict" description="In Ref. 1; AAB26991." evidence="15" ref="1">
    <original>E</original>
    <variation>G</variation>
    <location>
        <position position="98"/>
    </location>
</feature>
<feature type="sequence conflict" description="In Ref. 1; AA sequence." evidence="15" ref="1">
    <original>E</original>
    <variation>EERE</variation>
    <location>
        <position position="113"/>
    </location>
</feature>
<feature type="sequence conflict" description="In Ref. 5; AAO47866." evidence="15" ref="5">
    <original>E</original>
    <variation>D</variation>
    <location>
        <position position="169"/>
    </location>
</feature>
<feature type="sequence conflict" description="In Ref. 1; AAB26991." evidence="15" ref="1">
    <original>KR</original>
    <variation>QS</variation>
    <location>
        <begin position="267"/>
        <end position="268"/>
    </location>
</feature>
<feature type="sequence conflict" description="In Ref. 1; AAB26991." evidence="15" ref="1">
    <original>M</original>
    <variation>I</variation>
    <location>
        <position position="361"/>
    </location>
</feature>
<feature type="sequence conflict" description="In Ref. 1; AAB26991." evidence="15" ref="1">
    <original>P</original>
    <variation>Q</variation>
    <location>
        <position position="386"/>
    </location>
</feature>
<feature type="sequence conflict" description="In Ref. 1; AAB26991." evidence="15" ref="1">
    <original>KL</original>
    <variation>NV</variation>
    <location>
        <begin position="656"/>
        <end position="657"/>
    </location>
</feature>
<feature type="sequence conflict" description="In Ref. 6." evidence="15" ref="6">
    <original>HG</original>
    <variation>QR</variation>
    <location>
        <begin position="670"/>
        <end position="671"/>
    </location>
</feature>
<feature type="sequence conflict" description="In Ref. 1; AAB26991." evidence="15" ref="1">
    <original>F</original>
    <variation>Y</variation>
    <location>
        <position position="762"/>
    </location>
</feature>
<feature type="sequence conflict" description="In Ref. 6." evidence="15" ref="6">
    <original>A</original>
    <variation>G</variation>
    <location>
        <position position="932"/>
    </location>
</feature>
<feature type="sequence conflict" description="In Ref. 6." evidence="15" ref="6">
    <original>L</original>
    <variation>M</variation>
    <location>
        <position position="966"/>
    </location>
</feature>
<feature type="sequence conflict" description="In Ref. 5; AAO47866." evidence="15" ref="5">
    <original>M</original>
    <variation>I</variation>
    <location>
        <position position="1088"/>
    </location>
</feature>
<feature type="sequence conflict" description="In Ref. 6." evidence="15" ref="6">
    <original>D</original>
    <variation>G</variation>
    <location>
        <position position="1420"/>
    </location>
</feature>
<feature type="sequence conflict" description="In Ref. 6." evidence="15" ref="6">
    <original>P</original>
    <variation>G</variation>
    <location>
        <position position="1437"/>
    </location>
</feature>
<feature type="sequence conflict" description="In Ref. 5; AAO47866." evidence="15" ref="5">
    <original>K</original>
    <variation>E</variation>
    <location>
        <position position="1462"/>
    </location>
</feature>
<feature type="sequence conflict" description="In Ref. 6." evidence="15" ref="6">
    <original>V</original>
    <variation>G</variation>
    <location>
        <position position="1472"/>
    </location>
</feature>
<feature type="sequence conflict" description="In Ref. 6." evidence="15" ref="6">
    <original>R</original>
    <variation>G</variation>
    <location>
        <position position="1487"/>
    </location>
</feature>
<feature type="sequence conflict" description="In Ref. 6." evidence="15" ref="6">
    <original>RQ</original>
    <variation>AKGGTRVARC</variation>
    <location>
        <begin position="1525"/>
        <end position="1526"/>
    </location>
</feature>
<feature type="sequence conflict" description="In Ref. 6." evidence="15" ref="6">
    <original>M</original>
    <variation>N</variation>
    <location>
        <position position="1534"/>
    </location>
</feature>
<feature type="sequence conflict" description="In Ref. 6." evidence="15" ref="6">
    <original>L</original>
    <variation>LG</variation>
    <location>
        <position position="1611"/>
    </location>
</feature>
<feature type="sequence conflict" description="In Ref. 5; AAO47866." evidence="15" ref="5">
    <original>K</original>
    <variation>E</variation>
    <location>
        <position position="1680"/>
    </location>
</feature>
<feature type="sequence conflict" description="In Ref. 6." evidence="15" ref="6">
    <original>I</original>
    <variation>IRYTKFSKKI</variation>
    <location>
        <position position="1685"/>
    </location>
</feature>
<feature type="sequence conflict" description="In Ref. 6." evidence="15" ref="6">
    <original>V</original>
    <variation>G</variation>
    <location>
        <position position="2072"/>
    </location>
</feature>
<feature type="helix" evidence="18">
    <location>
        <begin position="23"/>
        <end position="26"/>
    </location>
</feature>
<feature type="turn" evidence="18">
    <location>
        <begin position="30"/>
        <end position="32"/>
    </location>
</feature>
<feature type="strand" evidence="18">
    <location>
        <begin position="42"/>
        <end position="44"/>
    </location>
</feature>
<feature type="turn" evidence="18">
    <location>
        <begin position="50"/>
        <end position="52"/>
    </location>
</feature>
<feature type="helix" evidence="18">
    <location>
        <begin position="53"/>
        <end position="56"/>
    </location>
</feature>
<feature type="turn" evidence="18">
    <location>
        <begin position="60"/>
        <end position="62"/>
    </location>
</feature>
<feature type="helix" evidence="18">
    <location>
        <begin position="64"/>
        <end position="69"/>
    </location>
</feature>
<gene>
    <name type="primary">Taf1</name>
    <name type="synonym">TAF250</name>
    <name type="ORF">CG17603</name>
</gene>
<accession>P51123</accession>
<accession>O97068</accession>
<accession>Q7KSX6</accession>
<accession>Q7KSX7</accession>
<accession>Q86LF7</accession>
<accession>Q9TX96</accession>
<reference key="1">
    <citation type="journal article" date="1993" name="Genes Dev.">
        <title>Drosophila 230-kD TFIID subunit, a functional homolog of the human cell cycle gene product, negatively regulates DNA binding of the TATA box-binding subunit of TFIID.</title>
        <authorList>
            <person name="Kokubo T."/>
            <person name="Gong D.-W."/>
            <person name="Yamashita S."/>
            <person name="Horikoshi M."/>
            <person name="Roeder R.G."/>
            <person name="Nakatani Y."/>
        </authorList>
    </citation>
    <scope>NUCLEOTIDE SEQUENCE [MRNA] (ISOFORM A)</scope>
    <scope>PROTEIN SEQUENCE OF 63-75 AND 540-546</scope>
    <scope>FUNCTION</scope>
</reference>
<reference key="2">
    <citation type="submission" date="1999-01" db="EMBL/GenBank/DDBJ databases">
        <title>Complete sequence of the Antennapedia complex of Drosophila.</title>
        <authorList>
            <person name="Celniker S.E."/>
            <person name="Pfeiffer B."/>
            <person name="Knafels J."/>
            <person name="Martin C.H."/>
            <person name="Mayeda C.A."/>
            <person name="Palazzolo M.J."/>
        </authorList>
    </citation>
    <scope>NUCLEOTIDE SEQUENCE [GENOMIC DNA]</scope>
    <source>
        <strain>Berkeley</strain>
    </source>
</reference>
<reference key="3">
    <citation type="journal article" date="2000" name="Science">
        <title>The genome sequence of Drosophila melanogaster.</title>
        <authorList>
            <person name="Adams M.D."/>
            <person name="Celniker S.E."/>
            <person name="Holt R.A."/>
            <person name="Evans C.A."/>
            <person name="Gocayne J.D."/>
            <person name="Amanatides P.G."/>
            <person name="Scherer S.E."/>
            <person name="Li P.W."/>
            <person name="Hoskins R.A."/>
            <person name="Galle R.F."/>
            <person name="George R.A."/>
            <person name="Lewis S.E."/>
            <person name="Richards S."/>
            <person name="Ashburner M."/>
            <person name="Henderson S.N."/>
            <person name="Sutton G.G."/>
            <person name="Wortman J.R."/>
            <person name="Yandell M.D."/>
            <person name="Zhang Q."/>
            <person name="Chen L.X."/>
            <person name="Brandon R.C."/>
            <person name="Rogers Y.-H.C."/>
            <person name="Blazej R.G."/>
            <person name="Champe M."/>
            <person name="Pfeiffer B.D."/>
            <person name="Wan K.H."/>
            <person name="Doyle C."/>
            <person name="Baxter E.G."/>
            <person name="Helt G."/>
            <person name="Nelson C.R."/>
            <person name="Miklos G.L.G."/>
            <person name="Abril J.F."/>
            <person name="Agbayani A."/>
            <person name="An H.-J."/>
            <person name="Andrews-Pfannkoch C."/>
            <person name="Baldwin D."/>
            <person name="Ballew R.M."/>
            <person name="Basu A."/>
            <person name="Baxendale J."/>
            <person name="Bayraktaroglu L."/>
            <person name="Beasley E.M."/>
            <person name="Beeson K.Y."/>
            <person name="Benos P.V."/>
            <person name="Berman B.P."/>
            <person name="Bhandari D."/>
            <person name="Bolshakov S."/>
            <person name="Borkova D."/>
            <person name="Botchan M.R."/>
            <person name="Bouck J."/>
            <person name="Brokstein P."/>
            <person name="Brottier P."/>
            <person name="Burtis K.C."/>
            <person name="Busam D.A."/>
            <person name="Butler H."/>
            <person name="Cadieu E."/>
            <person name="Center A."/>
            <person name="Chandra I."/>
            <person name="Cherry J.M."/>
            <person name="Cawley S."/>
            <person name="Dahlke C."/>
            <person name="Davenport L.B."/>
            <person name="Davies P."/>
            <person name="de Pablos B."/>
            <person name="Delcher A."/>
            <person name="Deng Z."/>
            <person name="Mays A.D."/>
            <person name="Dew I."/>
            <person name="Dietz S.M."/>
            <person name="Dodson K."/>
            <person name="Doup L.E."/>
            <person name="Downes M."/>
            <person name="Dugan-Rocha S."/>
            <person name="Dunkov B.C."/>
            <person name="Dunn P."/>
            <person name="Durbin K.J."/>
            <person name="Evangelista C.C."/>
            <person name="Ferraz C."/>
            <person name="Ferriera S."/>
            <person name="Fleischmann W."/>
            <person name="Fosler C."/>
            <person name="Gabrielian A.E."/>
            <person name="Garg N.S."/>
            <person name="Gelbart W.M."/>
            <person name="Glasser K."/>
            <person name="Glodek A."/>
            <person name="Gong F."/>
            <person name="Gorrell J.H."/>
            <person name="Gu Z."/>
            <person name="Guan P."/>
            <person name="Harris M."/>
            <person name="Harris N.L."/>
            <person name="Harvey D.A."/>
            <person name="Heiman T.J."/>
            <person name="Hernandez J.R."/>
            <person name="Houck J."/>
            <person name="Hostin D."/>
            <person name="Houston K.A."/>
            <person name="Howland T.J."/>
            <person name="Wei M.-H."/>
            <person name="Ibegwam C."/>
            <person name="Jalali M."/>
            <person name="Kalush F."/>
            <person name="Karpen G.H."/>
            <person name="Ke Z."/>
            <person name="Kennison J.A."/>
            <person name="Ketchum K.A."/>
            <person name="Kimmel B.E."/>
            <person name="Kodira C.D."/>
            <person name="Kraft C.L."/>
            <person name="Kravitz S."/>
            <person name="Kulp D."/>
            <person name="Lai Z."/>
            <person name="Lasko P."/>
            <person name="Lei Y."/>
            <person name="Levitsky A.A."/>
            <person name="Li J.H."/>
            <person name="Li Z."/>
            <person name="Liang Y."/>
            <person name="Lin X."/>
            <person name="Liu X."/>
            <person name="Mattei B."/>
            <person name="McIntosh T.C."/>
            <person name="McLeod M.P."/>
            <person name="McPherson D."/>
            <person name="Merkulov G."/>
            <person name="Milshina N.V."/>
            <person name="Mobarry C."/>
            <person name="Morris J."/>
            <person name="Moshrefi A."/>
            <person name="Mount S.M."/>
            <person name="Moy M."/>
            <person name="Murphy B."/>
            <person name="Murphy L."/>
            <person name="Muzny D.M."/>
            <person name="Nelson D.L."/>
            <person name="Nelson D.R."/>
            <person name="Nelson K.A."/>
            <person name="Nixon K."/>
            <person name="Nusskern D.R."/>
            <person name="Pacleb J.M."/>
            <person name="Palazzolo M."/>
            <person name="Pittman G.S."/>
            <person name="Pan S."/>
            <person name="Pollard J."/>
            <person name="Puri V."/>
            <person name="Reese M.G."/>
            <person name="Reinert K."/>
            <person name="Remington K."/>
            <person name="Saunders R.D.C."/>
            <person name="Scheeler F."/>
            <person name="Shen H."/>
            <person name="Shue B.C."/>
            <person name="Siden-Kiamos I."/>
            <person name="Simpson M."/>
            <person name="Skupski M.P."/>
            <person name="Smith T.J."/>
            <person name="Spier E."/>
            <person name="Spradling A.C."/>
            <person name="Stapleton M."/>
            <person name="Strong R."/>
            <person name="Sun E."/>
            <person name="Svirskas R."/>
            <person name="Tector C."/>
            <person name="Turner R."/>
            <person name="Venter E."/>
            <person name="Wang A.H."/>
            <person name="Wang X."/>
            <person name="Wang Z.-Y."/>
            <person name="Wassarman D.A."/>
            <person name="Weinstock G.M."/>
            <person name="Weissenbach J."/>
            <person name="Williams S.M."/>
            <person name="Woodage T."/>
            <person name="Worley K.C."/>
            <person name="Wu D."/>
            <person name="Yang S."/>
            <person name="Yao Q.A."/>
            <person name="Ye J."/>
            <person name="Yeh R.-F."/>
            <person name="Zaveri J.S."/>
            <person name="Zhan M."/>
            <person name="Zhang G."/>
            <person name="Zhao Q."/>
            <person name="Zheng L."/>
            <person name="Zheng X.H."/>
            <person name="Zhong F.N."/>
            <person name="Zhong W."/>
            <person name="Zhou X."/>
            <person name="Zhu S.C."/>
            <person name="Zhu X."/>
            <person name="Smith H.O."/>
            <person name="Gibbs R.A."/>
            <person name="Myers E.W."/>
            <person name="Rubin G.M."/>
            <person name="Venter J.C."/>
        </authorList>
    </citation>
    <scope>NUCLEOTIDE SEQUENCE [LARGE SCALE GENOMIC DNA]</scope>
    <source>
        <strain>Berkeley</strain>
    </source>
</reference>
<reference key="4">
    <citation type="journal article" date="2002" name="Genome Biol.">
        <title>Annotation of the Drosophila melanogaster euchromatic genome: a systematic review.</title>
        <authorList>
            <person name="Misra S."/>
            <person name="Crosby M.A."/>
            <person name="Mungall C.J."/>
            <person name="Matthews B.B."/>
            <person name="Campbell K.S."/>
            <person name="Hradecky P."/>
            <person name="Huang Y."/>
            <person name="Kaminker J.S."/>
            <person name="Millburn G.H."/>
            <person name="Prochnik S.E."/>
            <person name="Smith C.D."/>
            <person name="Tupy J.L."/>
            <person name="Whitfield E.J."/>
            <person name="Bayraktaroglu L."/>
            <person name="Berman B.P."/>
            <person name="Bettencourt B.R."/>
            <person name="Celniker S.E."/>
            <person name="de Grey A.D.N.J."/>
            <person name="Drysdale R.A."/>
            <person name="Harris N.L."/>
            <person name="Richter J."/>
            <person name="Russo S."/>
            <person name="Schroeder A.J."/>
            <person name="Shu S.Q."/>
            <person name="Stapleton M."/>
            <person name="Yamada C."/>
            <person name="Ashburner M."/>
            <person name="Gelbart W.M."/>
            <person name="Rubin G.M."/>
            <person name="Lewis S.E."/>
        </authorList>
    </citation>
    <scope>GENOME REANNOTATION</scope>
    <scope>ALTERNATIVE SPLICING</scope>
    <source>
        <strain>Berkeley</strain>
    </source>
</reference>
<reference key="5">
    <citation type="journal article" date="2002" name="Genome Biol.">
        <title>A Drosophila full-length cDNA resource.</title>
        <authorList>
            <person name="Stapleton M."/>
            <person name="Carlson J.W."/>
            <person name="Brokstein P."/>
            <person name="Yu C."/>
            <person name="Champe M."/>
            <person name="George R.A."/>
            <person name="Guarin H."/>
            <person name="Kronmiller B."/>
            <person name="Pacleb J.M."/>
            <person name="Park S."/>
            <person name="Wan K.H."/>
            <person name="Rubin G.M."/>
            <person name="Celniker S.E."/>
        </authorList>
    </citation>
    <scope>NUCLEOTIDE SEQUENCE [LARGE SCALE MRNA] (ISOFORM A)</scope>
    <source>
        <strain>Berkeley</strain>
        <tissue>Embryo</tissue>
    </source>
</reference>
<reference key="6">
    <citation type="journal article" date="1993" name="Nature">
        <title>Largest subunit of Drosophila transcription factor IID directs assembly of a complex containing TBP and a coactivator.</title>
        <authorList>
            <person name="Weinzierl R.O."/>
            <person name="Dynlacht B.D."/>
            <person name="Tjian R."/>
        </authorList>
    </citation>
    <scope>NUCLEOTIDE SEQUENCE OF 658-2129 (ISOFORM B)</scope>
    <scope>INTERACTION WITH TBP AND TAF4</scope>
</reference>
<reference key="7">
    <citation type="journal article" date="1996" name="Cell">
        <title>TAFII250 is a bipartite protein kinase that phosphorylates the base transcription factor RAP74.</title>
        <authorList>
            <person name="Dikstein R."/>
            <person name="Ruppert S."/>
            <person name="Tjian R."/>
        </authorList>
    </citation>
    <scope>FUNCTION</scope>
    <scope>AUTOPHOSPHORYLATION</scope>
    <scope>ATP-BINDING</scope>
</reference>
<reference key="8">
    <citation type="journal article" date="1993" name="EMBO J.">
        <title>Cloning and expression of Drosophila TAFII60 and human TAFII70 reveal conserved interactions with other subunits of TFIID.</title>
        <authorList>
            <person name="Weinzierl R.O."/>
            <person name="Ruppert S."/>
            <person name="Dynlacht B.D."/>
            <person name="Tanese N."/>
            <person name="Tjian R."/>
        </authorList>
    </citation>
    <scope>INTERACTION WITH TAF6</scope>
    <source>
        <strain>Oregon-R</strain>
    </source>
</reference>
<reference key="9">
    <citation type="journal article" date="1993" name="Proc. Natl. Acad. Sci. U.S.A.">
        <title>The Drosophila 110-kDa transcription factor TFIID subunit directly interacts with the N-terminal region of the 230-kDa subunit.</title>
        <authorList>
            <person name="Kokubo T."/>
            <person name="Gong D.-W."/>
            <person name="Roeder R.G."/>
            <person name="Horikoshi M."/>
            <person name="Nakatani Y."/>
        </authorList>
    </citation>
    <scope>INTERACTION WITH TAF4</scope>
    <source>
        <tissue>Embryo</tissue>
    </source>
</reference>
<reference key="10">
    <citation type="journal article" date="1994" name="Science">
        <title>Drosophila TAFII150: similarity to yeast gene TSM-1 and specific binding to core promoter DNA.</title>
        <authorList>
            <person name="Verrijzer C.P."/>
            <person name="Yokomori K."/>
            <person name="Chen J.-L."/>
            <person name="Tjian R."/>
        </authorList>
    </citation>
    <scope>INTERACTION WITH TAF2</scope>
    <source>
        <tissue>Embryo</tissue>
    </source>
</reference>
<reference key="11">
    <citation type="journal article" date="2004" name="Science">
        <title>TAF1 activates transcription by phosphorylation of serine 33 in histone H2B.</title>
        <authorList>
            <person name="Maile T."/>
            <person name="Kwoczynski S."/>
            <person name="Katzenberger R.J."/>
            <person name="Wassarman D.A."/>
            <person name="Sauer F."/>
        </authorList>
    </citation>
    <scope>RETRACTED PAPER</scope>
</reference>
<reference key="12">
    <citation type="journal article" date="2014" name="Science">
        <authorList>
            <person name="McNutt M."/>
        </authorList>
    </citation>
    <scope>RETRACTION NOTICE OF PUBMED:15143281</scope>
</reference>
<reference key="13">
    <citation type="journal article" date="2008" name="J. Proteome Res.">
        <title>Phosphoproteome analysis of Drosophila melanogaster embryos.</title>
        <authorList>
            <person name="Zhai B."/>
            <person name="Villen J."/>
            <person name="Beausoleil S.A."/>
            <person name="Mintseris J."/>
            <person name="Gygi S.P."/>
        </authorList>
    </citation>
    <scope>PHOSPHORYLATION [LARGE SCALE ANALYSIS] AT SER-286; SER-288; SER-290; SER-603 AND SER-1740</scope>
    <scope>IDENTIFICATION BY MASS SPECTROMETRY</scope>
    <source>
        <tissue>Embryo</tissue>
    </source>
</reference>
<reference key="14">
    <citation type="journal article" date="1998" name="Cell">
        <title>Solution structure of a TBP-TAF(II)230 complex: protein mimicry of the minor groove surface of the TATA box unwound by TBP.</title>
        <authorList>
            <person name="Liu D."/>
            <person name="Ishima R."/>
            <person name="Tong K.I."/>
            <person name="Bagby S."/>
            <person name="Kokubo T."/>
            <person name="Muhandiram D.R."/>
            <person name="Kay L.E."/>
            <person name="Nakatani Y."/>
            <person name="Ikura M."/>
        </authorList>
    </citation>
    <scope>STRUCTURE BY NMR OF 11-77</scope>
    <scope>FUNCTION</scope>
</reference>
<name>TAF1_DROME</name>
<comment type="function">
    <text evidence="10 11 12">TFIID is a multimeric protein complex that plays a central role in mediating promoter responses to various activators and repressors. Largest component and core scaffold of the complex. Contains N- and C-terminal Ser/Thr kinase domains which can autophosphorylate or transphosphorylate other transcription factors. Possesses DNA-binding activity. Essential for progression of the G1 phase of the cell cycle. Negative regulator of the TATA box-binding activity of Tbp.</text>
</comment>
<comment type="catalytic activity">
    <reaction>
        <text>L-seryl-[protein] + ATP = O-phospho-L-seryl-[protein] + ADP + H(+)</text>
        <dbReference type="Rhea" id="RHEA:17989"/>
        <dbReference type="Rhea" id="RHEA-COMP:9863"/>
        <dbReference type="Rhea" id="RHEA-COMP:11604"/>
        <dbReference type="ChEBI" id="CHEBI:15378"/>
        <dbReference type="ChEBI" id="CHEBI:29999"/>
        <dbReference type="ChEBI" id="CHEBI:30616"/>
        <dbReference type="ChEBI" id="CHEBI:83421"/>
        <dbReference type="ChEBI" id="CHEBI:456216"/>
        <dbReference type="EC" id="2.7.11.1"/>
    </reaction>
</comment>
<comment type="catalytic activity">
    <reaction>
        <text>L-threonyl-[protein] + ATP = O-phospho-L-threonyl-[protein] + ADP + H(+)</text>
        <dbReference type="Rhea" id="RHEA:46608"/>
        <dbReference type="Rhea" id="RHEA-COMP:11060"/>
        <dbReference type="Rhea" id="RHEA-COMP:11605"/>
        <dbReference type="ChEBI" id="CHEBI:15378"/>
        <dbReference type="ChEBI" id="CHEBI:30013"/>
        <dbReference type="ChEBI" id="CHEBI:30616"/>
        <dbReference type="ChEBI" id="CHEBI:61977"/>
        <dbReference type="ChEBI" id="CHEBI:456216"/>
        <dbReference type="EC" id="2.7.11.1"/>
    </reaction>
</comment>
<comment type="cofactor">
    <cofactor>
        <name>Mg(2+)</name>
        <dbReference type="ChEBI" id="CHEBI:18420"/>
    </cofactor>
</comment>
<comment type="activity regulation">
    <text>Autophosphorylates on Ser residues.</text>
</comment>
<comment type="subunit">
    <text evidence="6 7 8 9">Belongs to the TFIID complex which is composed of TATA binding protein (Tbp) and a number of TBP-associated factors (Tafs). Taf1 is the largest component of the TFIID complex. Interacts with Tbp, Taf2, Taf4 and Taf6.</text>
</comment>
<comment type="interaction">
    <interactant intactId="EBI-499582">
        <id>P51123</id>
    </interactant>
    <interactant intactId="EBI-277958">
        <id>P47825</id>
        <label>Taf4</label>
    </interactant>
    <organismsDiffer>false</organismsDiffer>
    <experiments>7</experiments>
</comment>
<comment type="interaction">
    <interactant intactId="EBI-499582">
        <id>P51123</id>
    </interactant>
    <interactant intactId="EBI-169179">
        <id>P20227</id>
        <label>Tbp</label>
    </interactant>
    <organismsDiffer>false</organismsDiffer>
    <experiments>3</experiments>
</comment>
<comment type="subcellular location">
    <subcellularLocation>
        <location>Nucleus</location>
    </subcellularLocation>
</comment>
<comment type="alternative products">
    <event type="alternative splicing"/>
    <isoform>
        <id>P51123-1</id>
        <name>B</name>
        <sequence type="displayed"/>
    </isoform>
    <isoform>
        <id>P51123-2</id>
        <name>A</name>
        <sequence type="described" ref="VSP_014794 VSP_014795"/>
    </isoform>
    <isoform>
        <id>P51123-3</id>
        <name>C</name>
        <sequence type="described" ref="VSP_014795"/>
    </isoform>
</comment>
<comment type="similarity">
    <text evidence="15">Belongs to the TAF1 family.</text>
</comment>
<comment type="caution">
    <text evidence="16 17">The C-terminal Ser/Thr kinase domain was reported to phosphorylate histone H2B at 'Ser-34'. However, the paper was retracted because some data, results and conclusions in the paper are not reliable.</text>
</comment>